<reference key="1">
    <citation type="journal article" date="1999" name="Nature">
        <title>Sequence and analysis of chromosome 2 of the plant Arabidopsis thaliana.</title>
        <authorList>
            <person name="Lin X."/>
            <person name="Kaul S."/>
            <person name="Rounsley S.D."/>
            <person name="Shea T.P."/>
            <person name="Benito M.-I."/>
            <person name="Town C.D."/>
            <person name="Fujii C.Y."/>
            <person name="Mason T.M."/>
            <person name="Bowman C.L."/>
            <person name="Barnstead M.E."/>
            <person name="Feldblyum T.V."/>
            <person name="Buell C.R."/>
            <person name="Ketchum K.A."/>
            <person name="Lee J.J."/>
            <person name="Ronning C.M."/>
            <person name="Koo H.L."/>
            <person name="Moffat K.S."/>
            <person name="Cronin L.A."/>
            <person name="Shen M."/>
            <person name="Pai G."/>
            <person name="Van Aken S."/>
            <person name="Umayam L."/>
            <person name="Tallon L.J."/>
            <person name="Gill J.E."/>
            <person name="Adams M.D."/>
            <person name="Carrera A.J."/>
            <person name="Creasy T.H."/>
            <person name="Goodman H.M."/>
            <person name="Somerville C.R."/>
            <person name="Copenhaver G.P."/>
            <person name="Preuss D."/>
            <person name="Nierman W.C."/>
            <person name="White O."/>
            <person name="Eisen J.A."/>
            <person name="Salzberg S.L."/>
            <person name="Fraser C.M."/>
            <person name="Venter J.C."/>
        </authorList>
    </citation>
    <scope>NUCLEOTIDE SEQUENCE [LARGE SCALE GENOMIC DNA]</scope>
    <source>
        <strain>cv. Columbia</strain>
    </source>
</reference>
<reference key="2">
    <citation type="journal article" date="2017" name="Plant J.">
        <title>Araport11: a complete reannotation of the Arabidopsis thaliana reference genome.</title>
        <authorList>
            <person name="Cheng C.Y."/>
            <person name="Krishnakumar V."/>
            <person name="Chan A.P."/>
            <person name="Thibaud-Nissen F."/>
            <person name="Schobel S."/>
            <person name="Town C.D."/>
        </authorList>
    </citation>
    <scope>GENOME REANNOTATION</scope>
    <source>
        <strain>cv. Columbia</strain>
    </source>
</reference>
<reference key="3">
    <citation type="journal article" date="2003" name="Science">
        <title>Empirical analysis of transcriptional activity in the Arabidopsis genome.</title>
        <authorList>
            <person name="Yamada K."/>
            <person name="Lim J."/>
            <person name="Dale J.M."/>
            <person name="Chen H."/>
            <person name="Shinn P."/>
            <person name="Palm C.J."/>
            <person name="Southwick A.M."/>
            <person name="Wu H.C."/>
            <person name="Kim C.J."/>
            <person name="Nguyen M."/>
            <person name="Pham P.K."/>
            <person name="Cheuk R.F."/>
            <person name="Karlin-Newmann G."/>
            <person name="Liu S.X."/>
            <person name="Lam B."/>
            <person name="Sakano H."/>
            <person name="Wu T."/>
            <person name="Yu G."/>
            <person name="Miranda M."/>
            <person name="Quach H.L."/>
            <person name="Tripp M."/>
            <person name="Chang C.H."/>
            <person name="Lee J.M."/>
            <person name="Toriumi M.J."/>
            <person name="Chan M.M."/>
            <person name="Tang C.C."/>
            <person name="Onodera C.S."/>
            <person name="Deng J.M."/>
            <person name="Akiyama K."/>
            <person name="Ansari Y."/>
            <person name="Arakawa T."/>
            <person name="Banh J."/>
            <person name="Banno F."/>
            <person name="Bowser L."/>
            <person name="Brooks S.Y."/>
            <person name="Carninci P."/>
            <person name="Chao Q."/>
            <person name="Choy N."/>
            <person name="Enju A."/>
            <person name="Goldsmith A.D."/>
            <person name="Gurjal M."/>
            <person name="Hansen N.F."/>
            <person name="Hayashizaki Y."/>
            <person name="Johnson-Hopson C."/>
            <person name="Hsuan V.W."/>
            <person name="Iida K."/>
            <person name="Karnes M."/>
            <person name="Khan S."/>
            <person name="Koesema E."/>
            <person name="Ishida J."/>
            <person name="Jiang P.X."/>
            <person name="Jones T."/>
            <person name="Kawai J."/>
            <person name="Kamiya A."/>
            <person name="Meyers C."/>
            <person name="Nakajima M."/>
            <person name="Narusaka M."/>
            <person name="Seki M."/>
            <person name="Sakurai T."/>
            <person name="Satou M."/>
            <person name="Tamse R."/>
            <person name="Vaysberg M."/>
            <person name="Wallender E.K."/>
            <person name="Wong C."/>
            <person name="Yamamura Y."/>
            <person name="Yuan S."/>
            <person name="Shinozaki K."/>
            <person name="Davis R.W."/>
            <person name="Theologis A."/>
            <person name="Ecker J.R."/>
        </authorList>
    </citation>
    <scope>NUCLEOTIDE SEQUENCE [LARGE SCALE MRNA]</scope>
    <source>
        <strain>cv. Columbia</strain>
    </source>
</reference>
<reference key="4">
    <citation type="journal article" date="2008" name="PLoS ONE">
        <title>The GCR2 gene family is not required for ABA control of seed germination and early seedling development in Arabidopsis.</title>
        <authorList>
            <person name="Guo J."/>
            <person name="Zeng Q."/>
            <person name="Emami M."/>
            <person name="Ellis B.E."/>
            <person name="Chen J.G."/>
        </authorList>
    </citation>
    <scope>FUNCTION</scope>
    <scope>DISRUPTION PHENOTYPE</scope>
</reference>
<dbReference type="EMBL" id="AC006234">
    <property type="protein sequence ID" value="AAD20918.1"/>
    <property type="status" value="ALT_SEQ"/>
    <property type="molecule type" value="Genomic_DNA"/>
</dbReference>
<dbReference type="EMBL" id="CP002685">
    <property type="protein sequence ID" value="AEC07068.1"/>
    <property type="molecule type" value="Genomic_DNA"/>
</dbReference>
<dbReference type="EMBL" id="AY063934">
    <property type="protein sequence ID" value="AAL36290.1"/>
    <property type="molecule type" value="mRNA"/>
</dbReference>
<dbReference type="EMBL" id="AY096480">
    <property type="protein sequence ID" value="AAM20120.1"/>
    <property type="molecule type" value="mRNA"/>
</dbReference>
<dbReference type="PIR" id="B84593">
    <property type="entry name" value="B84593"/>
</dbReference>
<dbReference type="RefSeq" id="NP_850003.1">
    <property type="nucleotide sequence ID" value="NM_179672.4"/>
</dbReference>
<dbReference type="SMR" id="Q8VZQ6"/>
<dbReference type="FunCoup" id="Q8VZQ6">
    <property type="interactions" value="2031"/>
</dbReference>
<dbReference type="STRING" id="3702.Q8VZQ6"/>
<dbReference type="iPTMnet" id="Q8VZQ6"/>
<dbReference type="PaxDb" id="3702-AT2G20770.1"/>
<dbReference type="ProteomicsDB" id="221951"/>
<dbReference type="EnsemblPlants" id="AT2G20770.1">
    <property type="protein sequence ID" value="AT2G20770.1"/>
    <property type="gene ID" value="AT2G20770"/>
</dbReference>
<dbReference type="GeneID" id="816606"/>
<dbReference type="Gramene" id="AT2G20770.1">
    <property type="protein sequence ID" value="AT2G20770.1"/>
    <property type="gene ID" value="AT2G20770"/>
</dbReference>
<dbReference type="KEGG" id="ath:AT2G20770"/>
<dbReference type="Araport" id="AT2G20770"/>
<dbReference type="TAIR" id="AT2G20770">
    <property type="gene designation" value="GCL2"/>
</dbReference>
<dbReference type="eggNOG" id="KOG2787">
    <property type="taxonomic scope" value="Eukaryota"/>
</dbReference>
<dbReference type="HOGENOM" id="CLU_036244_0_1_1"/>
<dbReference type="InParanoid" id="Q8VZQ6"/>
<dbReference type="OMA" id="YQEGCGE"/>
<dbReference type="PhylomeDB" id="Q8VZQ6"/>
<dbReference type="PRO" id="PR:Q8VZQ6"/>
<dbReference type="Proteomes" id="UP000006548">
    <property type="component" value="Chromosome 2"/>
</dbReference>
<dbReference type="ExpressionAtlas" id="Q8VZQ6">
    <property type="expression patterns" value="baseline and differential"/>
</dbReference>
<dbReference type="GO" id="GO:0019898">
    <property type="term" value="C:extrinsic component of membrane"/>
    <property type="evidence" value="ECO:0000250"/>
    <property type="project" value="TAIR"/>
</dbReference>
<dbReference type="GO" id="GO:0046872">
    <property type="term" value="F:metal ion binding"/>
    <property type="evidence" value="ECO:0007669"/>
    <property type="project" value="UniProtKB-KW"/>
</dbReference>
<dbReference type="GO" id="GO:0005975">
    <property type="term" value="P:carbohydrate metabolic process"/>
    <property type="evidence" value="ECO:0007669"/>
    <property type="project" value="InterPro"/>
</dbReference>
<dbReference type="GO" id="GO:0031179">
    <property type="term" value="P:peptide modification"/>
    <property type="evidence" value="ECO:0007669"/>
    <property type="project" value="InterPro"/>
</dbReference>
<dbReference type="CDD" id="cd04794">
    <property type="entry name" value="euk_LANCL"/>
    <property type="match status" value="1"/>
</dbReference>
<dbReference type="FunFam" id="1.50.10.10:FF:000035">
    <property type="entry name" value="LanC-like protein 2"/>
    <property type="match status" value="1"/>
</dbReference>
<dbReference type="Gene3D" id="1.50.10.10">
    <property type="match status" value="1"/>
</dbReference>
<dbReference type="InterPro" id="IPR012341">
    <property type="entry name" value="6hp_glycosidase-like_sf"/>
</dbReference>
<dbReference type="InterPro" id="IPR007822">
    <property type="entry name" value="LANC-like"/>
</dbReference>
<dbReference type="InterPro" id="IPR020464">
    <property type="entry name" value="LanC-like_prot_euk"/>
</dbReference>
<dbReference type="PANTHER" id="PTHR12736">
    <property type="entry name" value="LANC-LIKE PROTEIN"/>
    <property type="match status" value="1"/>
</dbReference>
<dbReference type="PANTHER" id="PTHR12736:SF22">
    <property type="entry name" value="LANC-LIKE PROTEIN GCL2"/>
    <property type="match status" value="1"/>
</dbReference>
<dbReference type="Pfam" id="PF05147">
    <property type="entry name" value="LANC_like"/>
    <property type="match status" value="1"/>
</dbReference>
<dbReference type="PRINTS" id="PR01951">
    <property type="entry name" value="LANCEUKARYTE"/>
</dbReference>
<dbReference type="PRINTS" id="PR01950">
    <property type="entry name" value="LANCSUPER"/>
</dbReference>
<dbReference type="SMART" id="SM01260">
    <property type="entry name" value="LANC_like"/>
    <property type="match status" value="1"/>
</dbReference>
<dbReference type="SUPFAM" id="SSF158745">
    <property type="entry name" value="LanC-like"/>
    <property type="match status" value="1"/>
</dbReference>
<proteinExistence type="evidence at transcript level"/>
<keyword id="KW-0479">Metal-binding</keyword>
<keyword id="KW-1185">Reference proteome</keyword>
<keyword id="KW-0862">Zinc</keyword>
<feature type="chain" id="PRO_0000424629" description="LanC-like protein GCL2">
    <location>
        <begin position="1"/>
        <end position="405"/>
    </location>
</feature>
<feature type="binding site" evidence="1">
    <location>
        <position position="278"/>
    </location>
    <ligand>
        <name>Zn(2+)</name>
        <dbReference type="ChEBI" id="CHEBI:29105"/>
    </ligand>
</feature>
<feature type="binding site" evidence="1">
    <location>
        <position position="323"/>
    </location>
    <ligand>
        <name>Zn(2+)</name>
        <dbReference type="ChEBI" id="CHEBI:29105"/>
    </ligand>
</feature>
<feature type="binding site" evidence="1">
    <location>
        <position position="324"/>
    </location>
    <ligand>
        <name>Zn(2+)</name>
        <dbReference type="ChEBI" id="CHEBI:29105"/>
    </ligand>
</feature>
<organism>
    <name type="scientific">Arabidopsis thaliana</name>
    <name type="common">Mouse-ear cress</name>
    <dbReference type="NCBI Taxonomy" id="3702"/>
    <lineage>
        <taxon>Eukaryota</taxon>
        <taxon>Viridiplantae</taxon>
        <taxon>Streptophyta</taxon>
        <taxon>Embryophyta</taxon>
        <taxon>Tracheophyta</taxon>
        <taxon>Spermatophyta</taxon>
        <taxon>Magnoliopsida</taxon>
        <taxon>eudicotyledons</taxon>
        <taxon>Gunneridae</taxon>
        <taxon>Pentapetalae</taxon>
        <taxon>rosids</taxon>
        <taxon>malvids</taxon>
        <taxon>Brassicales</taxon>
        <taxon>Brassicaceae</taxon>
        <taxon>Camelineae</taxon>
        <taxon>Arabidopsis</taxon>
    </lineage>
</organism>
<sequence>MAGRFFDNVMPDFVKEKESVSGGDTLRNLLAMPYSSLSQQLKRSALDLKETVVIETWGFSGQTVEDFTLYSGTLGAAFLLFRAYQVTGNANDLSLCLEIVKACDTASASSGDVTFLCGRAGVCGLGAVAAKLSGEEDLLNYYLGQFRLIRLSSDLPNELLYGRVGYLWACLFINKYIGKETLSSDTIREVAQEIIKEGRSMAKKGSSPLMFEWYGKRYWGAAHGLAGIMHVLMDVQLKPDEAEDVKGTLKYMIKNRFPSGNYPASEEDKKKDILVHWCHGAPGIALTLGKAAEVFGEREFLEASAAAAEVVWNRGLLKRVGICHGISGNAYVFLALYRATGRSEYLYRAKAFASFLLDRGPKLLSKGEMHGGDSPYSLFEGVAGMAYLFLDMVDPSEARFPGYEL</sequence>
<name>GCL2_ARATH</name>
<evidence type="ECO:0000250" key="1"/>
<evidence type="ECO:0000269" key="2">
    <source>
    </source>
</evidence>
<evidence type="ECO:0000305" key="3"/>
<accession>Q8VZQ6</accession>
<accession>Q9SKU0</accession>
<protein>
    <recommendedName>
        <fullName>LanC-like protein GCL2</fullName>
    </recommendedName>
    <alternativeName>
        <fullName>G protein-coupled receptor 2-like protein 2</fullName>
        <shortName>Protein GCR2-like 2</shortName>
    </alternativeName>
</protein>
<gene>
    <name type="primary">GCL2</name>
    <name type="ordered locus">At2g20770</name>
    <name type="ORF">F5H14.26</name>
</gene>
<comment type="function">
    <text evidence="2">May play a role in signaling. May be not involved in abscisic acid (ABA) signaling.</text>
</comment>
<comment type="disruption phenotype">
    <text evidence="2">No visible phenotype under normal growth conditions.</text>
</comment>
<comment type="similarity">
    <text evidence="3">Belongs to the LanC-like protein family.</text>
</comment>
<comment type="sequence caution" evidence="3">
    <conflict type="erroneous gene model prediction">
        <sequence resource="EMBL-CDS" id="AAD20918"/>
    </conflict>
</comment>